<keyword id="KW-0997">Cell inner membrane</keyword>
<keyword id="KW-1003">Cell membrane</keyword>
<keyword id="KW-0472">Membrane</keyword>
<keyword id="KW-1185">Reference proteome</keyword>
<keyword id="KW-0812">Transmembrane</keyword>
<keyword id="KW-1133">Transmembrane helix</keyword>
<keyword id="KW-0813">Transport</keyword>
<feature type="chain" id="PRO_0000316875" description="Multidrug resistance protein MdtL">
    <location>
        <begin position="1"/>
        <end position="390"/>
    </location>
</feature>
<feature type="transmembrane region" description="Helical" evidence="1">
    <location>
        <begin position="4"/>
        <end position="24"/>
    </location>
</feature>
<feature type="transmembrane region" description="Helical" evidence="1">
    <location>
        <begin position="42"/>
        <end position="62"/>
    </location>
</feature>
<feature type="transmembrane region" description="Helical" evidence="1">
    <location>
        <begin position="69"/>
        <end position="89"/>
    </location>
</feature>
<feature type="transmembrane region" description="Helical" evidence="1">
    <location>
        <begin position="93"/>
        <end position="113"/>
    </location>
</feature>
<feature type="transmembrane region" description="Helical" evidence="1">
    <location>
        <begin position="131"/>
        <end position="151"/>
    </location>
</feature>
<feature type="transmembrane region" description="Helical" evidence="1">
    <location>
        <begin position="158"/>
        <end position="178"/>
    </location>
</feature>
<feature type="transmembrane region" description="Helical" evidence="1">
    <location>
        <begin position="199"/>
        <end position="221"/>
    </location>
</feature>
<feature type="transmembrane region" description="Helical" evidence="1">
    <location>
        <begin position="245"/>
        <end position="265"/>
    </location>
</feature>
<feature type="transmembrane region" description="Helical" evidence="1">
    <location>
        <begin position="269"/>
        <end position="289"/>
    </location>
</feature>
<feature type="transmembrane region" description="Helical" evidence="1">
    <location>
        <begin position="293"/>
        <end position="313"/>
    </location>
</feature>
<feature type="transmembrane region" description="Helical" evidence="1">
    <location>
        <begin position="316"/>
        <end position="336"/>
    </location>
</feature>
<feature type="transmembrane region" description="Helical" evidence="1">
    <location>
        <begin position="353"/>
        <end position="375"/>
    </location>
</feature>
<comment type="subcellular location">
    <subcellularLocation>
        <location evidence="1">Cell inner membrane</location>
        <topology evidence="1">Multi-pass membrane protein</topology>
    </subcellularLocation>
</comment>
<comment type="similarity">
    <text evidence="1">Belongs to the major facilitator superfamily. DHA1 family. MdtL (TC 2.A.1.2.22) subfamily.</text>
</comment>
<name>MDTL_CITK8</name>
<accession>A8ACM0</accession>
<sequence>MTRFLICSFALVLLYPAGIDMYLVGLPRIAADLNASEAQLHIAFSVYLAGMATAMLFAGKVADQSGRKPVAIAGAVIFIIASMLCSRATDGSLFLTGRFIQGIGAGCCYVVAFAILRDTLDDRRRAKVLSLLNGITCIVPVLAPVLGHLIMLKFPWQSLFYTMIAMGIAVCLLSVFILKETRPATCSSTSRPQQNAESLLNRFFLSRLAITTLSVSVILTFVNTSPVLLMEMMGFDRGEYATTMALTAGISMAVSFSTPFALSVFKPRTLMLTSQGLFLAAGIVLSLSSSHAVTLFGLTLICAGFSVGFGVAMSQALGPFSLRAGVASSVLGIAQVCGSSLWIWLAAVIGFNALNMLIGILIGCSMVCILLLMTIQPAAHYEKIHHQSRS</sequence>
<organism>
    <name type="scientific">Citrobacter koseri (strain ATCC BAA-895 / CDC 4225-83 / SGSC4696)</name>
    <dbReference type="NCBI Taxonomy" id="290338"/>
    <lineage>
        <taxon>Bacteria</taxon>
        <taxon>Pseudomonadati</taxon>
        <taxon>Pseudomonadota</taxon>
        <taxon>Gammaproteobacteria</taxon>
        <taxon>Enterobacterales</taxon>
        <taxon>Enterobacteriaceae</taxon>
        <taxon>Citrobacter</taxon>
    </lineage>
</organism>
<gene>
    <name evidence="1" type="primary">mdtL</name>
    <name type="ordered locus">CKO_00054</name>
</gene>
<protein>
    <recommendedName>
        <fullName evidence="1">Multidrug resistance protein MdtL</fullName>
    </recommendedName>
</protein>
<dbReference type="EMBL" id="CP000822">
    <property type="protein sequence ID" value="ABV11233.1"/>
    <property type="molecule type" value="Genomic_DNA"/>
</dbReference>
<dbReference type="RefSeq" id="WP_012000813.1">
    <property type="nucleotide sequence ID" value="NC_009792.1"/>
</dbReference>
<dbReference type="SMR" id="A8ACM0"/>
<dbReference type="STRING" id="290338.CKO_00054"/>
<dbReference type="GeneID" id="45134359"/>
<dbReference type="KEGG" id="cko:CKO_00054"/>
<dbReference type="HOGENOM" id="CLU_001265_47_1_6"/>
<dbReference type="OrthoDB" id="9814303at2"/>
<dbReference type="Proteomes" id="UP000008148">
    <property type="component" value="Chromosome"/>
</dbReference>
<dbReference type="GO" id="GO:0005886">
    <property type="term" value="C:plasma membrane"/>
    <property type="evidence" value="ECO:0007669"/>
    <property type="project" value="UniProtKB-SubCell"/>
</dbReference>
<dbReference type="GO" id="GO:0022857">
    <property type="term" value="F:transmembrane transporter activity"/>
    <property type="evidence" value="ECO:0007669"/>
    <property type="project" value="UniProtKB-UniRule"/>
</dbReference>
<dbReference type="CDD" id="cd17320">
    <property type="entry name" value="MFS_MdfA_MDR_like"/>
    <property type="match status" value="1"/>
</dbReference>
<dbReference type="FunFam" id="1.20.1720.10:FF:000003">
    <property type="entry name" value="Multidrug resistance protein MdtL"/>
    <property type="match status" value="1"/>
</dbReference>
<dbReference type="Gene3D" id="1.20.1720.10">
    <property type="entry name" value="Multidrug resistance protein D"/>
    <property type="match status" value="1"/>
</dbReference>
<dbReference type="HAMAP" id="MF_01530">
    <property type="entry name" value="MFS_MdtL"/>
    <property type="match status" value="1"/>
</dbReference>
<dbReference type="InterPro" id="IPR011701">
    <property type="entry name" value="MFS"/>
</dbReference>
<dbReference type="InterPro" id="IPR020846">
    <property type="entry name" value="MFS_dom"/>
</dbReference>
<dbReference type="InterPro" id="IPR036259">
    <property type="entry name" value="MFS_trans_sf"/>
</dbReference>
<dbReference type="InterPro" id="IPR023697">
    <property type="entry name" value="Multidrug-R_MdtL"/>
</dbReference>
<dbReference type="NCBIfam" id="NF007782">
    <property type="entry name" value="PRK10473.1"/>
    <property type="match status" value="1"/>
</dbReference>
<dbReference type="PANTHER" id="PTHR42718">
    <property type="entry name" value="MAJOR FACILITATOR SUPERFAMILY MULTIDRUG TRANSPORTER MFSC"/>
    <property type="match status" value="1"/>
</dbReference>
<dbReference type="PANTHER" id="PTHR42718:SF9">
    <property type="entry name" value="MAJOR FACILITATOR SUPERFAMILY MULTIDRUG TRANSPORTER MFSC"/>
    <property type="match status" value="1"/>
</dbReference>
<dbReference type="Pfam" id="PF07690">
    <property type="entry name" value="MFS_1"/>
    <property type="match status" value="1"/>
</dbReference>
<dbReference type="SUPFAM" id="SSF103473">
    <property type="entry name" value="MFS general substrate transporter"/>
    <property type="match status" value="1"/>
</dbReference>
<dbReference type="PROSITE" id="PS50850">
    <property type="entry name" value="MFS"/>
    <property type="match status" value="1"/>
</dbReference>
<proteinExistence type="inferred from homology"/>
<reference key="1">
    <citation type="submission" date="2007-08" db="EMBL/GenBank/DDBJ databases">
        <authorList>
            <consortium name="The Citrobacter koseri Genome Sequencing Project"/>
            <person name="McClelland M."/>
            <person name="Sanderson E.K."/>
            <person name="Porwollik S."/>
            <person name="Spieth J."/>
            <person name="Clifton W.S."/>
            <person name="Latreille P."/>
            <person name="Courtney L."/>
            <person name="Wang C."/>
            <person name="Pepin K."/>
            <person name="Bhonagiri V."/>
            <person name="Nash W."/>
            <person name="Johnson M."/>
            <person name="Thiruvilangam P."/>
            <person name="Wilson R."/>
        </authorList>
    </citation>
    <scope>NUCLEOTIDE SEQUENCE [LARGE SCALE GENOMIC DNA]</scope>
    <source>
        <strain>ATCC BAA-895 / CDC 4225-83 / SGSC4696</strain>
    </source>
</reference>
<evidence type="ECO:0000255" key="1">
    <source>
        <dbReference type="HAMAP-Rule" id="MF_01530"/>
    </source>
</evidence>